<sequence length="96" mass="10265">MSTLKMMLLILLLLLPLATFDSDGQAIPGGGIPSAVNSRVGRLLGGDEKSGRSLEKRCSSGKTCGSVEPVLCCARSDCYCRLIQTRSYWVPICVCP</sequence>
<proteinExistence type="evidence at protein level"/>
<feature type="signal peptide" evidence="1">
    <location>
        <begin position="1"/>
        <end position="20"/>
    </location>
</feature>
<feature type="propeptide" id="PRO_0000444683" evidence="5">
    <location>
        <begin position="21"/>
        <end position="57"/>
    </location>
</feature>
<feature type="chain" id="PRO_0000444684" description="Conotoxin Mr15.1" evidence="2">
    <location>
        <begin position="58"/>
        <end position="96"/>
    </location>
</feature>
<organism>
    <name type="scientific">Conus marmoreus</name>
    <name type="common">Marble cone</name>
    <dbReference type="NCBI Taxonomy" id="42752"/>
    <lineage>
        <taxon>Eukaryota</taxon>
        <taxon>Metazoa</taxon>
        <taxon>Spiralia</taxon>
        <taxon>Lophotrochozoa</taxon>
        <taxon>Mollusca</taxon>
        <taxon>Gastropoda</taxon>
        <taxon>Caenogastropoda</taxon>
        <taxon>Neogastropoda</taxon>
        <taxon>Conoidea</taxon>
        <taxon>Conidae</taxon>
        <taxon>Conus</taxon>
    </lineage>
</organism>
<comment type="subcellular location">
    <subcellularLocation>
        <location evidence="2">Secreted</location>
    </subcellularLocation>
</comment>
<comment type="tissue specificity">
    <text evidence="5">Expressed by the venom duct.</text>
</comment>
<comment type="domain">
    <text evidence="4">The cysteine framework is XV (C-C-CC-C-C-C-C).</text>
</comment>
<comment type="PTM">
    <text evidence="4">Contains 4 disulfide bonds.</text>
</comment>
<comment type="similarity">
    <text evidence="4">Belongs to the conotoxin N superfamily.</text>
</comment>
<name>NF1_CONMR</name>
<reference key="1">
    <citation type="journal article" date="2013" name="Mol. Cell. Proteomics">
        <title>Deep venomics reveals the mechanism for expanded peptide diversity in cone snail venom.</title>
        <authorList>
            <person name="Dutertre S."/>
            <person name="Jin A.H."/>
            <person name="Kaas Q."/>
            <person name="Jones A."/>
            <person name="Alewood P.F."/>
            <person name="Lewis R.J."/>
        </authorList>
    </citation>
    <scope>NUCLEOTIDE SEQUENCE [MRNA]</scope>
    <scope>IDENTIFICATION BY MASS SPECTROMETRY</scope>
    <scope>SUBCELLULAR LOCATION</scope>
</reference>
<protein>
    <recommendedName>
        <fullName evidence="4">Conotoxin Mr15.1</fullName>
    </recommendedName>
    <alternativeName>
        <fullName evidence="3">Mr093</fullName>
    </alternativeName>
</protein>
<dbReference type="GO" id="GO:0005576">
    <property type="term" value="C:extracellular region"/>
    <property type="evidence" value="ECO:0007669"/>
    <property type="project" value="UniProtKB-SubCell"/>
</dbReference>
<dbReference type="GO" id="GO:0090729">
    <property type="term" value="F:toxin activity"/>
    <property type="evidence" value="ECO:0007669"/>
    <property type="project" value="UniProtKB-KW"/>
</dbReference>
<evidence type="ECO:0000255" key="1"/>
<evidence type="ECO:0000269" key="2">
    <source>
    </source>
</evidence>
<evidence type="ECO:0000303" key="3">
    <source>
    </source>
</evidence>
<evidence type="ECO:0000305" key="4"/>
<evidence type="ECO:0000305" key="5">
    <source>
    </source>
</evidence>
<accession>P0DM18</accession>
<keyword id="KW-0165">Cleavage on pair of basic residues</keyword>
<keyword id="KW-1015">Disulfide bond</keyword>
<keyword id="KW-0964">Secreted</keyword>
<keyword id="KW-0732">Signal</keyword>
<keyword id="KW-0800">Toxin</keyword>